<name>M4A10_PONAB</name>
<accession>Q5REZ6</accession>
<protein>
    <recommendedName>
        <fullName>Membrane-spanning 4-domains subfamily A member 10</fullName>
    </recommendedName>
</protein>
<reference key="1">
    <citation type="submission" date="2004-11" db="EMBL/GenBank/DDBJ databases">
        <authorList>
            <consortium name="The German cDNA consortium"/>
        </authorList>
    </citation>
    <scope>NUCLEOTIDE SEQUENCE [LARGE SCALE MRNA]</scope>
    <source>
        <tissue>Kidney</tissue>
    </source>
</reference>
<dbReference type="EMBL" id="CR857366">
    <property type="protein sequence ID" value="CAH89661.1"/>
    <property type="molecule type" value="mRNA"/>
</dbReference>
<dbReference type="SMR" id="Q5REZ6"/>
<dbReference type="FunCoup" id="Q5REZ6">
    <property type="interactions" value="23"/>
</dbReference>
<dbReference type="STRING" id="9601.ENSPPYP00000003697"/>
<dbReference type="eggNOG" id="ENOG502SH2M">
    <property type="taxonomic scope" value="Eukaryota"/>
</dbReference>
<dbReference type="HOGENOM" id="CLU_1041911_0_0_1"/>
<dbReference type="InParanoid" id="Q5REZ6"/>
<dbReference type="Proteomes" id="UP000001595">
    <property type="component" value="Unplaced"/>
</dbReference>
<dbReference type="GO" id="GO:0005886">
    <property type="term" value="C:plasma membrane"/>
    <property type="evidence" value="ECO:0007669"/>
    <property type="project" value="TreeGrafter"/>
</dbReference>
<dbReference type="GO" id="GO:0007166">
    <property type="term" value="P:cell surface receptor signaling pathway"/>
    <property type="evidence" value="ECO:0007669"/>
    <property type="project" value="TreeGrafter"/>
</dbReference>
<dbReference type="InterPro" id="IPR007237">
    <property type="entry name" value="CD20-like"/>
</dbReference>
<dbReference type="InterPro" id="IPR030417">
    <property type="entry name" value="MS4A"/>
</dbReference>
<dbReference type="PANTHER" id="PTHR23320:SF5">
    <property type="entry name" value="MEMBRANE-SPANNING 4-DOMAINS SUBFAMILY A MEMBER 10"/>
    <property type="match status" value="1"/>
</dbReference>
<dbReference type="PANTHER" id="PTHR23320">
    <property type="entry name" value="MEMBRANE-SPANNING 4-DOMAINS SUBFAMILY A MS4A -RELATED"/>
    <property type="match status" value="1"/>
</dbReference>
<dbReference type="Pfam" id="PF04103">
    <property type="entry name" value="CD20"/>
    <property type="match status" value="1"/>
</dbReference>
<organism>
    <name type="scientific">Pongo abelii</name>
    <name type="common">Sumatran orangutan</name>
    <name type="synonym">Pongo pygmaeus abelii</name>
    <dbReference type="NCBI Taxonomy" id="9601"/>
    <lineage>
        <taxon>Eukaryota</taxon>
        <taxon>Metazoa</taxon>
        <taxon>Chordata</taxon>
        <taxon>Craniata</taxon>
        <taxon>Vertebrata</taxon>
        <taxon>Euteleostomi</taxon>
        <taxon>Mammalia</taxon>
        <taxon>Eutheria</taxon>
        <taxon>Euarchontoglires</taxon>
        <taxon>Primates</taxon>
        <taxon>Haplorrhini</taxon>
        <taxon>Catarrhini</taxon>
        <taxon>Hominidae</taxon>
        <taxon>Pongo</taxon>
    </lineage>
</organism>
<feature type="chain" id="PRO_0000238678" description="Membrane-spanning 4-domains subfamily A member 10">
    <location>
        <begin position="1"/>
        <end position="264"/>
    </location>
</feature>
<feature type="topological domain" description="Cytoplasmic" evidence="2">
    <location>
        <begin position="1"/>
        <end position="57"/>
    </location>
</feature>
<feature type="transmembrane region" description="Helical" evidence="2">
    <location>
        <begin position="58"/>
        <end position="78"/>
    </location>
</feature>
<feature type="topological domain" description="Extracellular" evidence="2">
    <location>
        <begin position="79"/>
        <end position="89"/>
    </location>
</feature>
<feature type="transmembrane region" description="Helical" evidence="2">
    <location>
        <begin position="90"/>
        <end position="110"/>
    </location>
</feature>
<feature type="topological domain" description="Cytoplasmic" evidence="2">
    <location>
        <begin position="111"/>
        <end position="119"/>
    </location>
</feature>
<feature type="transmembrane region" description="Helical" evidence="2">
    <location>
        <begin position="120"/>
        <end position="140"/>
    </location>
</feature>
<feature type="topological domain" description="Extracellular" evidence="2">
    <location>
        <begin position="141"/>
        <end position="169"/>
    </location>
</feature>
<feature type="transmembrane region" description="Helical" evidence="2">
    <location>
        <begin position="170"/>
        <end position="190"/>
    </location>
</feature>
<feature type="topological domain" description="Cytoplasmic" evidence="2">
    <location>
        <begin position="191"/>
        <end position="264"/>
    </location>
</feature>
<feature type="region of interest" description="Disordered" evidence="3">
    <location>
        <begin position="17"/>
        <end position="48"/>
    </location>
</feature>
<feature type="compositionally biased region" description="Polar residues" evidence="3">
    <location>
        <begin position="17"/>
        <end position="37"/>
    </location>
</feature>
<sequence length="264" mass="29387">MKAEATVIPSRCARGQTTAAPGVQPWQTSVPQNTTQPKLLAPRQHEKSQKRSSLLKELGAFHITIALLHLVFGGYLASTVKSLHLVVLKSWYPFWGAASFLISGILAITMKTFSKTYLKMLCLMTNLVSLFCVLSGLFVISKDLFLESPFESPIWRMYPNSTVHIQRLELALLCFTVLELFLPVPTAVTAWRDRPSAKNDDACLLPNTPSHLKGLPVEPPPSYQSVIQGDAQHKQHQRLREVKQVTPDTWIVTDGAGIWTQTAN</sequence>
<evidence type="ECO:0000250" key="1"/>
<evidence type="ECO:0000255" key="2"/>
<evidence type="ECO:0000256" key="3">
    <source>
        <dbReference type="SAM" id="MobiDB-lite"/>
    </source>
</evidence>
<evidence type="ECO:0000305" key="4"/>
<proteinExistence type="evidence at transcript level"/>
<gene>
    <name type="primary">MS4A10</name>
</gene>
<keyword id="KW-0472">Membrane</keyword>
<keyword id="KW-0675">Receptor</keyword>
<keyword id="KW-1185">Reference proteome</keyword>
<keyword id="KW-0812">Transmembrane</keyword>
<keyword id="KW-1133">Transmembrane helix</keyword>
<comment type="function">
    <text evidence="1">May be involved in signal transduction as a component of a multimeric receptor complex.</text>
</comment>
<comment type="subcellular location">
    <subcellularLocation>
        <location evidence="1">Membrane</location>
        <topology evidence="1">Multi-pass membrane protein</topology>
    </subcellularLocation>
</comment>
<comment type="similarity">
    <text evidence="4">Belongs to the MS4A family.</text>
</comment>